<dbReference type="EC" id="1.3.8.13" evidence="1 3"/>
<dbReference type="EMBL" id="X73904">
    <property type="protein sequence ID" value="CAA52111.1"/>
    <property type="molecule type" value="Genomic_DNA"/>
</dbReference>
<dbReference type="EMBL" id="U00096">
    <property type="protein sequence ID" value="AAC73150.1"/>
    <property type="molecule type" value="Genomic_DNA"/>
</dbReference>
<dbReference type="EMBL" id="AP009048">
    <property type="protein sequence ID" value="BAB96608.2"/>
    <property type="molecule type" value="Genomic_DNA"/>
</dbReference>
<dbReference type="PIR" id="G64724">
    <property type="entry name" value="I41011"/>
</dbReference>
<dbReference type="RefSeq" id="NP_414581.1">
    <property type="nucleotide sequence ID" value="NC_000913.3"/>
</dbReference>
<dbReference type="RefSeq" id="WP_000347117.1">
    <property type="nucleotide sequence ID" value="NZ_STEB01000010.1"/>
</dbReference>
<dbReference type="SMR" id="P60584"/>
<dbReference type="BioGRID" id="4263349">
    <property type="interactions" value="367"/>
</dbReference>
<dbReference type="DIP" id="DIP-9241N"/>
<dbReference type="FunCoup" id="P60584">
    <property type="interactions" value="661"/>
</dbReference>
<dbReference type="IntAct" id="P60584">
    <property type="interactions" value="5"/>
</dbReference>
<dbReference type="STRING" id="511145.b0039"/>
<dbReference type="PaxDb" id="511145-b0039"/>
<dbReference type="EnsemblBacteria" id="AAC73150">
    <property type="protein sequence ID" value="AAC73150"/>
    <property type="gene ID" value="b0039"/>
</dbReference>
<dbReference type="GeneID" id="93777396"/>
<dbReference type="GeneID" id="949064"/>
<dbReference type="KEGG" id="ecj:JW0038"/>
<dbReference type="KEGG" id="eco:b0039"/>
<dbReference type="KEGG" id="ecoc:C3026_00205"/>
<dbReference type="PATRIC" id="fig|1411691.4.peg.2244"/>
<dbReference type="EchoBASE" id="EB1521"/>
<dbReference type="eggNOG" id="COG1960">
    <property type="taxonomic scope" value="Bacteria"/>
</dbReference>
<dbReference type="HOGENOM" id="CLU_018204_0_2_6"/>
<dbReference type="InParanoid" id="P60584"/>
<dbReference type="OMA" id="DAMFSYC"/>
<dbReference type="OrthoDB" id="9769473at2"/>
<dbReference type="PhylomeDB" id="P60584"/>
<dbReference type="BioCyc" id="EcoCyc:CROBETREDUCT-MONOMER"/>
<dbReference type="BioCyc" id="MetaCyc:CROBETREDUCT-MONOMER"/>
<dbReference type="BRENDA" id="1.3.8.13">
    <property type="organism ID" value="2026"/>
</dbReference>
<dbReference type="UniPathway" id="UPA00117"/>
<dbReference type="PRO" id="PR:P60584"/>
<dbReference type="Proteomes" id="UP000000625">
    <property type="component" value="Chromosome"/>
</dbReference>
<dbReference type="GO" id="GO:0005737">
    <property type="term" value="C:cytoplasm"/>
    <property type="evidence" value="ECO:0000318"/>
    <property type="project" value="GO_Central"/>
</dbReference>
<dbReference type="GO" id="GO:0003995">
    <property type="term" value="F:acyl-CoA dehydrogenase activity"/>
    <property type="evidence" value="ECO:0000318"/>
    <property type="project" value="GO_Central"/>
</dbReference>
<dbReference type="GO" id="GO:0050660">
    <property type="term" value="F:flavin adenine dinucleotide binding"/>
    <property type="evidence" value="ECO:0007669"/>
    <property type="project" value="InterPro"/>
</dbReference>
<dbReference type="GO" id="GO:0009437">
    <property type="term" value="P:carnitine metabolic process"/>
    <property type="evidence" value="ECO:0007669"/>
    <property type="project" value="UniProtKB-UniRule"/>
</dbReference>
<dbReference type="GO" id="GO:0033539">
    <property type="term" value="P:fatty acid beta-oxidation using acyl-CoA dehydrogenase"/>
    <property type="evidence" value="ECO:0000318"/>
    <property type="project" value="GO_Central"/>
</dbReference>
<dbReference type="CDD" id="cd00567">
    <property type="entry name" value="ACAD"/>
    <property type="match status" value="1"/>
</dbReference>
<dbReference type="FunFam" id="1.20.140.10:FF:000001">
    <property type="entry name" value="Acyl-CoA dehydrogenase"/>
    <property type="match status" value="1"/>
</dbReference>
<dbReference type="FunFam" id="2.40.110.10:FF:000002">
    <property type="entry name" value="Acyl-CoA dehydrogenase fadE12"/>
    <property type="match status" value="1"/>
</dbReference>
<dbReference type="FunFam" id="1.10.540.10:FF:000005">
    <property type="entry name" value="Crotonobetainyl-CoA reductase"/>
    <property type="match status" value="1"/>
</dbReference>
<dbReference type="Gene3D" id="1.10.540.10">
    <property type="entry name" value="Acyl-CoA dehydrogenase/oxidase, N-terminal domain"/>
    <property type="match status" value="1"/>
</dbReference>
<dbReference type="Gene3D" id="2.40.110.10">
    <property type="entry name" value="Butyryl-CoA Dehydrogenase, subunit A, domain 2"/>
    <property type="match status" value="1"/>
</dbReference>
<dbReference type="Gene3D" id="1.20.140.10">
    <property type="entry name" value="Butyryl-CoA Dehydrogenase, subunit A, domain 3"/>
    <property type="match status" value="1"/>
</dbReference>
<dbReference type="HAMAP" id="MF_01052">
    <property type="entry name" value="CaiA"/>
    <property type="match status" value="1"/>
</dbReference>
<dbReference type="InterPro" id="IPR006089">
    <property type="entry name" value="Acyl-CoA_DH_CS"/>
</dbReference>
<dbReference type="InterPro" id="IPR006091">
    <property type="entry name" value="Acyl-CoA_Oxase/DH_mid-dom"/>
</dbReference>
<dbReference type="InterPro" id="IPR046373">
    <property type="entry name" value="Acyl-CoA_Oxase/DH_mid-dom_sf"/>
</dbReference>
<dbReference type="InterPro" id="IPR036250">
    <property type="entry name" value="AcylCo_DH-like_C"/>
</dbReference>
<dbReference type="InterPro" id="IPR009075">
    <property type="entry name" value="AcylCo_DH/oxidase_C"/>
</dbReference>
<dbReference type="InterPro" id="IPR013786">
    <property type="entry name" value="AcylCoA_DH/ox_N"/>
</dbReference>
<dbReference type="InterPro" id="IPR037069">
    <property type="entry name" value="AcylCoA_DH/ox_N_sf"/>
</dbReference>
<dbReference type="InterPro" id="IPR009100">
    <property type="entry name" value="AcylCoA_DH/oxidase_NM_dom_sf"/>
</dbReference>
<dbReference type="InterPro" id="IPR023450">
    <property type="entry name" value="CaiA"/>
</dbReference>
<dbReference type="NCBIfam" id="NF002885">
    <property type="entry name" value="PRK03354.1"/>
    <property type="match status" value="1"/>
</dbReference>
<dbReference type="PANTHER" id="PTHR43884">
    <property type="entry name" value="ACYL-COA DEHYDROGENASE"/>
    <property type="match status" value="1"/>
</dbReference>
<dbReference type="PANTHER" id="PTHR43884:SF12">
    <property type="entry name" value="ISOVALERYL-COA DEHYDROGENASE, MITOCHONDRIAL-RELATED"/>
    <property type="match status" value="1"/>
</dbReference>
<dbReference type="Pfam" id="PF00441">
    <property type="entry name" value="Acyl-CoA_dh_1"/>
    <property type="match status" value="1"/>
</dbReference>
<dbReference type="Pfam" id="PF02770">
    <property type="entry name" value="Acyl-CoA_dh_M"/>
    <property type="match status" value="1"/>
</dbReference>
<dbReference type="Pfam" id="PF02771">
    <property type="entry name" value="Acyl-CoA_dh_N"/>
    <property type="match status" value="1"/>
</dbReference>
<dbReference type="PIRSF" id="PIRSF016578">
    <property type="entry name" value="HsaA"/>
    <property type="match status" value="1"/>
</dbReference>
<dbReference type="SUPFAM" id="SSF47203">
    <property type="entry name" value="Acyl-CoA dehydrogenase C-terminal domain-like"/>
    <property type="match status" value="1"/>
</dbReference>
<dbReference type="SUPFAM" id="SSF56645">
    <property type="entry name" value="Acyl-CoA dehydrogenase NM domain-like"/>
    <property type="match status" value="1"/>
</dbReference>
<dbReference type="PROSITE" id="PS00072">
    <property type="entry name" value="ACYL_COA_DH_1"/>
    <property type="match status" value="1"/>
</dbReference>
<dbReference type="PROSITE" id="PS00073">
    <property type="entry name" value="ACYL_COA_DH_2"/>
    <property type="match status" value="1"/>
</dbReference>
<protein>
    <recommendedName>
        <fullName evidence="1">Crotonobetainyl-CoA reductase</fullName>
        <ecNumber evidence="1 3">1.3.8.13</ecNumber>
    </recommendedName>
    <alternativeName>
        <fullName evidence="9">Crotobetaine reductase</fullName>
    </alternativeName>
    <alternativeName>
        <fullName evidence="1">Crotonobetainyl-CoA dehydrogenase</fullName>
    </alternativeName>
</protein>
<evidence type="ECO:0000255" key="1">
    <source>
        <dbReference type="HAMAP-Rule" id="MF_01052"/>
    </source>
</evidence>
<evidence type="ECO:0000269" key="2">
    <source>
    </source>
</evidence>
<evidence type="ECO:0000269" key="3">
    <source>
    </source>
</evidence>
<evidence type="ECO:0000269" key="4">
    <source>
    </source>
</evidence>
<evidence type="ECO:0000269" key="5">
    <source>
    </source>
</evidence>
<evidence type="ECO:0000269" key="6">
    <source>
    </source>
</evidence>
<evidence type="ECO:0000269" key="7">
    <source>
    </source>
</evidence>
<evidence type="ECO:0000303" key="8">
    <source>
    </source>
</evidence>
<evidence type="ECO:0000303" key="9">
    <source>
    </source>
</evidence>
<evidence type="ECO:0000305" key="10"/>
<evidence type="ECO:0000305" key="11">
    <source>
    </source>
</evidence>
<evidence type="ECO:0000305" key="12">
    <source>
    </source>
</evidence>
<name>CAIA_ECOLI</name>
<sequence length="380" mass="42558">MDFNLNDEQELFVAGIRELMASENWEAYFAECDRDSVYPERFVKALADMGIDSLLIPEEHGGLDAGFVTLAAVWMELGRLGAPTYVLYQLPGGFNTFLREGTQEQIDKIMAFRGTGKQMWNSAITEPGAGSDVGSLKTTYTRRNGKIYLNGSKCFITSSAYTPYIVVMARDGASPDKPVYTEWFVDMSKPGIKVTKLEKLGLRMDSCCEITFDDVELDEKDMFGREGNGFNRVKEEFDHERFLVALTNYGTAMCAFEDAARYANQRVQFGEAIGRFQLIQEKFAHMAIKLNSMKNMLYEAAWKADNGTITSGDAAMCKYFCANAAFEVVDSAMQVLGGVGIAGNHRISRFWRDLRVDRVSGGSDEMQILTLGRAVLKQYR</sequence>
<comment type="function">
    <text evidence="3 4 11 12">Catalyzes the reduction of crotonobetainyl-CoA to gamma-butyrobetainyl-CoA (PubMed:10209289, PubMed:10978161, PubMed:8060125). The electron donor could be the FixA/FixB complex (PubMed:12081978).</text>
</comment>
<comment type="catalytic activity">
    <reaction evidence="1 3">
        <text>4-(trimethylamino)butanoyl-CoA + oxidized [electron-transfer flavoprotein] + H(+) = crotonobetainyl-CoA + reduced [electron-transfer flavoprotein]</text>
        <dbReference type="Rhea" id="RHEA:51584"/>
        <dbReference type="Rhea" id="RHEA-COMP:10685"/>
        <dbReference type="Rhea" id="RHEA-COMP:10686"/>
        <dbReference type="ChEBI" id="CHEBI:15378"/>
        <dbReference type="ChEBI" id="CHEBI:57692"/>
        <dbReference type="ChEBI" id="CHEBI:58307"/>
        <dbReference type="ChEBI" id="CHEBI:60933"/>
        <dbReference type="ChEBI" id="CHEBI:61513"/>
        <dbReference type="EC" id="1.3.8.13"/>
    </reaction>
</comment>
<comment type="cofactor">
    <cofactor evidence="1 2">
        <name>FAD</name>
        <dbReference type="ChEBI" id="CHEBI:57692"/>
    </cofactor>
    <text evidence="2">Binds 1 FAD per subunit.</text>
</comment>
<comment type="biophysicochemical properties">
    <phDependence>
        <text evidence="7">Optimum pH is 7.8.</text>
    </phDependence>
    <temperatureDependence>
        <text evidence="7">Optimum temperature is 40-45 degrees Celsius.</text>
    </temperatureDependence>
</comment>
<comment type="pathway">
    <text evidence="1 10">Amine and polyamine metabolism; carnitine metabolism.</text>
</comment>
<comment type="subunit">
    <text evidence="1 2">Homotetramer.</text>
</comment>
<comment type="subcellular location">
    <subcellularLocation>
        <location evidence="1 7">Cytoplasm</location>
    </subcellularLocation>
</comment>
<comment type="induction">
    <text evidence="6 7">Transcribed during anaerobic growth in the presence of L-carnitine or crotonobetaine.</text>
</comment>
<comment type="disruption phenotype">
    <text evidence="5">Deletion of the gene abolishes gamma-butyrobetaine formation and increases L-carnitine production under anaerobic and aerobic conditions.</text>
</comment>
<comment type="similarity">
    <text evidence="1 10">Belongs to the acyl-CoA dehydrogenase family.</text>
</comment>
<feature type="chain" id="PRO_0000201193" description="Crotonobetainyl-CoA reductase">
    <location>
        <begin position="1"/>
        <end position="380"/>
    </location>
</feature>
<keyword id="KW-0963">Cytoplasm</keyword>
<keyword id="KW-0903">Direct protein sequencing</keyword>
<keyword id="KW-0274">FAD</keyword>
<keyword id="KW-0285">Flavoprotein</keyword>
<keyword id="KW-0560">Oxidoreductase</keyword>
<keyword id="KW-1185">Reference proteome</keyword>
<reference key="1">
    <citation type="journal article" date="1994" name="Mol. Microbiol.">
        <title>Molecular characterization of the cai operon necessary for carnitine metabolism in Escherichia coli.</title>
        <authorList>
            <person name="Eichler K."/>
            <person name="Bourgis F."/>
            <person name="Buchet A."/>
            <person name="Kleber H.-P."/>
            <person name="Mandrand-Berthelot M.-A."/>
        </authorList>
    </citation>
    <scope>NUCLEOTIDE SEQUENCE [GENOMIC DNA]</scope>
    <source>
        <strain>O44:K74</strain>
    </source>
</reference>
<reference key="2">
    <citation type="journal article" date="1992" name="Nucleic Acids Res.">
        <title>Systematic sequencing of the Escherichia coli genome: analysis of the 0-2.4 min region.</title>
        <authorList>
            <person name="Yura T."/>
            <person name="Mori H."/>
            <person name="Nagai H."/>
            <person name="Nagata T."/>
            <person name="Ishihama A."/>
            <person name="Fujita N."/>
            <person name="Isono K."/>
            <person name="Mizobuchi K."/>
            <person name="Nakata A."/>
        </authorList>
    </citation>
    <scope>NUCLEOTIDE SEQUENCE [LARGE SCALE GENOMIC DNA]</scope>
    <source>
        <strain>K12</strain>
    </source>
</reference>
<reference key="3">
    <citation type="journal article" date="1997" name="Science">
        <title>The complete genome sequence of Escherichia coli K-12.</title>
        <authorList>
            <person name="Blattner F.R."/>
            <person name="Plunkett G. III"/>
            <person name="Bloch C.A."/>
            <person name="Perna N.T."/>
            <person name="Burland V."/>
            <person name="Riley M."/>
            <person name="Collado-Vides J."/>
            <person name="Glasner J.D."/>
            <person name="Rode C.K."/>
            <person name="Mayhew G.F."/>
            <person name="Gregor J."/>
            <person name="Davis N.W."/>
            <person name="Kirkpatrick H.A."/>
            <person name="Goeden M.A."/>
            <person name="Rose D.J."/>
            <person name="Mau B."/>
            <person name="Shao Y."/>
        </authorList>
    </citation>
    <scope>NUCLEOTIDE SEQUENCE [LARGE SCALE GENOMIC DNA]</scope>
    <source>
        <strain>K12 / MG1655 / ATCC 47076</strain>
    </source>
</reference>
<reference key="4">
    <citation type="journal article" date="2006" name="Mol. Syst. Biol.">
        <title>Highly accurate genome sequences of Escherichia coli K-12 strains MG1655 and W3110.</title>
        <authorList>
            <person name="Hayashi K."/>
            <person name="Morooka N."/>
            <person name="Yamamoto Y."/>
            <person name="Fujita K."/>
            <person name="Isono K."/>
            <person name="Choi S."/>
            <person name="Ohtsubo E."/>
            <person name="Baba T."/>
            <person name="Wanner B.L."/>
            <person name="Mori H."/>
            <person name="Horiuchi T."/>
        </authorList>
    </citation>
    <scope>NUCLEOTIDE SEQUENCE [LARGE SCALE GENOMIC DNA]</scope>
    <scope>SEQUENCE REVISION TO 143 AND 182</scope>
    <source>
        <strain>K12 / W3110 / ATCC 27325 / DSM 5911</strain>
    </source>
</reference>
<reference key="5">
    <citation type="journal article" date="1994" name="Antonie Van Leeuwenhoek">
        <title>Crotonobetaine reductase from Escherichia coli--a new inducible enzyme of anaerobic metabolization of L(-)-carnitine.</title>
        <authorList>
            <person name="Roth S."/>
            <person name="Jung K."/>
            <person name="Jung H."/>
            <person name="Hommel R.K."/>
            <person name="Kleber H.P."/>
        </authorList>
    </citation>
    <scope>FUNCTION</scope>
    <scope>BIOPHYSICOCHEMICAL PROPERTIES</scope>
    <scope>SUBCELLULAR LOCATION</scope>
    <scope>INDUCTION</scope>
    <source>
        <strain>O44:K74</strain>
    </source>
</reference>
<reference key="6">
    <citation type="journal article" date="1999" name="Biochim. Biophys. Acta">
        <title>Crotonobetaine reductase from Escherichia coli consists of two proteins.</title>
        <authorList>
            <person name="Preusser A."/>
            <person name="Wagner U."/>
            <person name="Elssner T."/>
            <person name="Kleber H.-P."/>
        </authorList>
    </citation>
    <scope>PROTEIN SEQUENCE OF 1-20</scope>
    <scope>FUNCTION</scope>
    <scope>COFACTOR</scope>
    <scope>SUBUNIT</scope>
    <source>
        <strain>O44:K74</strain>
    </source>
</reference>
<reference key="7">
    <citation type="journal article" date="2000" name="Biochemistry">
        <title>Isolation, identification, and synthesis of gamma-butyrobetainyl-CoA and crotonobetainyl-CoA, compounds involved in carnitine metabolism of E. coli.</title>
        <authorList>
            <person name="Elssner T."/>
            <person name="Hennig L."/>
            <person name="Frauendorf H."/>
            <person name="Haferburg D."/>
            <person name="Kleber H.P."/>
        </authorList>
    </citation>
    <scope>FUNCTION</scope>
    <scope>CATALYTIC ACTIVITY</scope>
    <source>
        <strain>O44:K74</strain>
    </source>
</reference>
<reference key="8">
    <citation type="journal article" date="2002" name="J. Bacteriol.">
        <title>The fixA and fixB genes are necessary for anaerobic carnitine reduction in Escherichia coli.</title>
        <authorList>
            <person name="Walt A."/>
            <person name="Kahn M.L."/>
        </authorList>
    </citation>
    <scope>FUNCTION</scope>
    <source>
        <strain>K12 / BW25113</strain>
    </source>
</reference>
<reference key="9">
    <citation type="journal article" date="2013" name="Microb. Cell Fact.">
        <title>Metabolic engineering for high yielding L(-)-carnitine production in Escherichia coli.</title>
        <authorList>
            <person name="Arense P."/>
            <person name="Bernal V."/>
            <person name="Charlier D."/>
            <person name="Iborra J.L."/>
            <person name="Foulquie-Moreno M.R."/>
            <person name="Canovas M."/>
        </authorList>
    </citation>
    <scope>DISRUPTION PHENOTYPE</scope>
    <source>
        <strain>K12 / BW25113</strain>
    </source>
</reference>
<organism>
    <name type="scientific">Escherichia coli (strain K12)</name>
    <dbReference type="NCBI Taxonomy" id="83333"/>
    <lineage>
        <taxon>Bacteria</taxon>
        <taxon>Pseudomonadati</taxon>
        <taxon>Pseudomonadota</taxon>
        <taxon>Gammaproteobacteria</taxon>
        <taxon>Enterobacterales</taxon>
        <taxon>Enterobacteriaceae</taxon>
        <taxon>Escherichia</taxon>
    </lineage>
</organism>
<gene>
    <name evidence="1 8" type="primary">caiA</name>
    <name type="synonym">yaaO</name>
    <name type="ordered locus">b0039</name>
    <name type="ordered locus">JW0038</name>
</gene>
<proteinExistence type="evidence at protein level"/>
<accession>P60584</accession>
<accession>P31571</accession>